<gene>
    <name type="primary">Ccdc127</name>
</gene>
<dbReference type="EMBL" id="BC058157">
    <property type="protein sequence ID" value="AAH58157.1"/>
    <property type="molecule type" value="mRNA"/>
</dbReference>
<dbReference type="RefSeq" id="NP_942061.1">
    <property type="nucleotide sequence ID" value="NM_198766.1"/>
</dbReference>
<dbReference type="SMR" id="Q6PEB9"/>
<dbReference type="FunCoup" id="Q6PEB9">
    <property type="interactions" value="1522"/>
</dbReference>
<dbReference type="STRING" id="10116.ENSRNOP00000017779"/>
<dbReference type="PhosphoSitePlus" id="Q6PEB9"/>
<dbReference type="PaxDb" id="10116-ENSRNOP00000017779"/>
<dbReference type="GeneID" id="308060"/>
<dbReference type="KEGG" id="rno:308060"/>
<dbReference type="UCSC" id="RGD:735106">
    <property type="organism name" value="rat"/>
</dbReference>
<dbReference type="AGR" id="RGD:735106"/>
<dbReference type="CTD" id="133957"/>
<dbReference type="RGD" id="735106">
    <property type="gene designation" value="Ccdc127"/>
</dbReference>
<dbReference type="eggNOG" id="ENOG502QVKQ">
    <property type="taxonomic scope" value="Eukaryota"/>
</dbReference>
<dbReference type="InParanoid" id="Q6PEB9"/>
<dbReference type="PhylomeDB" id="Q6PEB9"/>
<dbReference type="PRO" id="PR:Q6PEB9"/>
<dbReference type="Proteomes" id="UP000002494">
    <property type="component" value="Unplaced"/>
</dbReference>
<dbReference type="InterPro" id="IPR034607">
    <property type="entry name" value="CCDC127"/>
</dbReference>
<dbReference type="PANTHER" id="PTHR31958">
    <property type="entry name" value="COILED-COIL DOMAIN-CONTAINING PROTEIN 127"/>
    <property type="match status" value="1"/>
</dbReference>
<dbReference type="PANTHER" id="PTHR31958:SF2">
    <property type="entry name" value="COILED-COIL DOMAIN-CONTAINING PROTEIN 127"/>
    <property type="match status" value="1"/>
</dbReference>
<name>CC127_RAT</name>
<protein>
    <recommendedName>
        <fullName>Coiled-coil domain-containing protein 127</fullName>
    </recommendedName>
</protein>
<reference key="1">
    <citation type="journal article" date="2004" name="Genome Res.">
        <title>The status, quality, and expansion of the NIH full-length cDNA project: the Mammalian Gene Collection (MGC).</title>
        <authorList>
            <consortium name="The MGC Project Team"/>
        </authorList>
    </citation>
    <scope>NUCLEOTIDE SEQUENCE [LARGE SCALE MRNA]</scope>
    <source>
        <tissue>Pituitary</tissue>
    </source>
</reference>
<organism>
    <name type="scientific">Rattus norvegicus</name>
    <name type="common">Rat</name>
    <dbReference type="NCBI Taxonomy" id="10116"/>
    <lineage>
        <taxon>Eukaryota</taxon>
        <taxon>Metazoa</taxon>
        <taxon>Chordata</taxon>
        <taxon>Craniata</taxon>
        <taxon>Vertebrata</taxon>
        <taxon>Euteleostomi</taxon>
        <taxon>Mammalia</taxon>
        <taxon>Eutheria</taxon>
        <taxon>Euarchontoglires</taxon>
        <taxon>Glires</taxon>
        <taxon>Rodentia</taxon>
        <taxon>Myomorpha</taxon>
        <taxon>Muroidea</taxon>
        <taxon>Muridae</taxon>
        <taxon>Murinae</taxon>
        <taxon>Rattus</taxon>
    </lineage>
</organism>
<accession>Q6PEB9</accession>
<evidence type="ECO:0000255" key="1"/>
<keyword id="KW-0175">Coiled coil</keyword>
<keyword id="KW-1185">Reference proteome</keyword>
<sequence length="260" mass="30470">MNNLNDPPNWNIQPNPRADGGDGSKWNYALLVPMLGLAAFRWIWSRESQKEIEKARRAYHQQTAAFQQDLDAKYHAVISEHRRAVAQLSLELEKEQNRTTSFREALISQGRKLAEEKKLLEQERAQIIQEKSQRQPLRRAYLSCLEEEDEWQRRAQLVLKEVGEALEERQNIYCSLILPRSARQQLEKSLLVRTSADPVAADLEMATGLSDIFKHDKHCGDVWNTNKRQNGKLMWMYLKYWELLVELKKFKKIEKVILGK</sequence>
<proteinExistence type="evidence at transcript level"/>
<feature type="chain" id="PRO_0000263753" description="Coiled-coil domain-containing protein 127">
    <location>
        <begin position="1"/>
        <end position="260"/>
    </location>
</feature>
<feature type="coiled-coil region" evidence="1">
    <location>
        <begin position="47"/>
        <end position="135"/>
    </location>
</feature>